<accession>P09403</accession>
<accession>Q5SJV2</accession>
<feature type="initiator methionine" description="Removed">
    <location>
        <position position="1"/>
    </location>
</feature>
<feature type="chain" id="PRO_0000146027" description="Phosphoglycerate kinase">
    <location>
        <begin position="2"/>
        <end position="390"/>
    </location>
</feature>
<feature type="binding site" evidence="1">
    <location>
        <begin position="19"/>
        <end position="21"/>
    </location>
    <ligand>
        <name>substrate</name>
    </ligand>
</feature>
<feature type="binding site" evidence="1">
    <location>
        <position position="34"/>
    </location>
    <ligand>
        <name>substrate</name>
    </ligand>
</feature>
<feature type="binding site" evidence="1">
    <location>
        <begin position="57"/>
        <end position="60"/>
    </location>
    <ligand>
        <name>substrate</name>
    </ligand>
</feature>
<feature type="binding site" evidence="1">
    <location>
        <position position="115"/>
    </location>
    <ligand>
        <name>substrate</name>
    </ligand>
</feature>
<feature type="binding site" evidence="1">
    <location>
        <position position="148"/>
    </location>
    <ligand>
        <name>substrate</name>
    </ligand>
</feature>
<feature type="binding site" evidence="1">
    <location>
        <position position="198"/>
    </location>
    <ligand>
        <name>ATP</name>
        <dbReference type="ChEBI" id="CHEBI:30616"/>
    </ligand>
</feature>
<feature type="binding site" evidence="1">
    <location>
        <position position="289"/>
    </location>
    <ligand>
        <name>ATP</name>
        <dbReference type="ChEBI" id="CHEBI:30616"/>
    </ligand>
</feature>
<feature type="binding site" evidence="1">
    <location>
        <position position="320"/>
    </location>
    <ligand>
        <name>ATP</name>
        <dbReference type="ChEBI" id="CHEBI:30616"/>
    </ligand>
</feature>
<feature type="binding site" evidence="1">
    <location>
        <begin position="347"/>
        <end position="350"/>
    </location>
    <ligand>
        <name>ATP</name>
        <dbReference type="ChEBI" id="CHEBI:30616"/>
    </ligand>
</feature>
<feature type="helix" evidence="3">
    <location>
        <begin position="4"/>
        <end position="6"/>
    </location>
</feature>
<feature type="strand" evidence="3">
    <location>
        <begin position="13"/>
        <end position="17"/>
    </location>
</feature>
<feature type="strand" evidence="3">
    <location>
        <begin position="28"/>
        <end position="30"/>
    </location>
</feature>
<feature type="helix" evidence="3">
    <location>
        <begin position="33"/>
        <end position="47"/>
    </location>
</feature>
<feature type="strand" evidence="3">
    <location>
        <begin position="51"/>
        <end position="55"/>
    </location>
</feature>
<feature type="helix" evidence="3">
    <location>
        <begin position="66"/>
        <end position="68"/>
    </location>
</feature>
<feature type="helix" evidence="3">
    <location>
        <begin position="71"/>
        <end position="80"/>
    </location>
</feature>
<feature type="strand" evidence="3">
    <location>
        <begin position="84"/>
        <end position="86"/>
    </location>
</feature>
<feature type="helix" evidence="3">
    <location>
        <begin position="94"/>
        <end position="101"/>
    </location>
</feature>
<feature type="strand" evidence="3">
    <location>
        <begin position="108"/>
        <end position="110"/>
    </location>
</feature>
<feature type="helix" evidence="3">
    <location>
        <begin position="114"/>
        <end position="116"/>
    </location>
</feature>
<feature type="turn" evidence="3">
    <location>
        <begin position="118"/>
        <end position="123"/>
    </location>
</feature>
<feature type="helix" evidence="3">
    <location>
        <begin position="125"/>
        <end position="131"/>
    </location>
</feature>
<feature type="helix" evidence="3">
    <location>
        <begin position="132"/>
        <end position="134"/>
    </location>
</feature>
<feature type="strand" evidence="3">
    <location>
        <begin position="136"/>
        <end position="140"/>
    </location>
</feature>
<feature type="helix" evidence="3">
    <location>
        <begin position="143"/>
        <end position="145"/>
    </location>
</feature>
<feature type="turn" evidence="3">
    <location>
        <begin position="151"/>
        <end position="155"/>
    </location>
</feature>
<feature type="helix" evidence="3">
    <location>
        <begin position="156"/>
        <end position="158"/>
    </location>
</feature>
<feature type="strand" evidence="3">
    <location>
        <begin position="162"/>
        <end position="164"/>
    </location>
</feature>
<feature type="helix" evidence="3">
    <location>
        <begin position="166"/>
        <end position="176"/>
    </location>
</feature>
<feature type="turn" evidence="3">
    <location>
        <begin position="177"/>
        <end position="179"/>
    </location>
</feature>
<feature type="strand" evidence="3">
    <location>
        <begin position="184"/>
        <end position="190"/>
    </location>
</feature>
<feature type="helix" evidence="3">
    <location>
        <begin position="195"/>
        <end position="197"/>
    </location>
</feature>
<feature type="helix" evidence="3">
    <location>
        <begin position="199"/>
        <end position="205"/>
    </location>
</feature>
<feature type="helix" evidence="3">
    <location>
        <begin position="206"/>
        <end position="208"/>
    </location>
</feature>
<feature type="strand" evidence="3">
    <location>
        <begin position="210"/>
        <end position="214"/>
    </location>
</feature>
<feature type="helix" evidence="3">
    <location>
        <begin position="219"/>
        <end position="225"/>
    </location>
</feature>
<feature type="helix" evidence="3">
    <location>
        <begin position="237"/>
        <end position="239"/>
    </location>
</feature>
<feature type="helix" evidence="3">
    <location>
        <begin position="240"/>
        <end position="253"/>
    </location>
</feature>
<feature type="strand" evidence="3">
    <location>
        <begin position="256"/>
        <end position="258"/>
    </location>
</feature>
<feature type="strand" evidence="3">
    <location>
        <begin position="261"/>
        <end position="268"/>
    </location>
</feature>
<feature type="strand" evidence="3">
    <location>
        <begin position="276"/>
        <end position="279"/>
    </location>
</feature>
<feature type="strand" evidence="3">
    <location>
        <begin position="288"/>
        <end position="292"/>
    </location>
</feature>
<feature type="helix" evidence="3">
    <location>
        <begin position="294"/>
        <end position="303"/>
    </location>
</feature>
<feature type="turn" evidence="3">
    <location>
        <begin position="304"/>
        <end position="306"/>
    </location>
</feature>
<feature type="strand" evidence="3">
    <location>
        <begin position="308"/>
        <end position="314"/>
    </location>
</feature>
<feature type="turn" evidence="3">
    <location>
        <begin position="322"/>
        <end position="325"/>
    </location>
</feature>
<feature type="helix" evidence="3">
    <location>
        <begin position="326"/>
        <end position="336"/>
    </location>
</feature>
<feature type="strand" evidence="3">
    <location>
        <begin position="342"/>
        <end position="347"/>
    </location>
</feature>
<feature type="helix" evidence="3">
    <location>
        <begin position="348"/>
        <end position="355"/>
    </location>
</feature>
<feature type="turn" evidence="3">
    <location>
        <begin position="356"/>
        <end position="358"/>
    </location>
</feature>
<feature type="helix" evidence="3">
    <location>
        <begin position="360"/>
        <end position="362"/>
    </location>
</feature>
<feature type="strand" evidence="3">
    <location>
        <begin position="363"/>
        <end position="366"/>
    </location>
</feature>
<feature type="strand" evidence="3">
    <location>
        <begin position="369"/>
        <end position="371"/>
    </location>
</feature>
<feature type="helix" evidence="3">
    <location>
        <begin position="372"/>
        <end position="379"/>
    </location>
</feature>
<feature type="helix" evidence="3">
    <location>
        <begin position="383"/>
        <end position="386"/>
    </location>
</feature>
<organism>
    <name type="scientific">Thermus thermophilus (strain ATCC 27634 / DSM 579 / HB8)</name>
    <dbReference type="NCBI Taxonomy" id="300852"/>
    <lineage>
        <taxon>Bacteria</taxon>
        <taxon>Thermotogati</taxon>
        <taxon>Deinococcota</taxon>
        <taxon>Deinococci</taxon>
        <taxon>Thermales</taxon>
        <taxon>Thermaceae</taxon>
        <taxon>Thermus</taxon>
    </lineage>
</organism>
<name>PGK_THET8</name>
<comment type="catalytic activity">
    <reaction>
        <text>(2R)-3-phosphoglycerate + ATP = (2R)-3-phospho-glyceroyl phosphate + ADP</text>
        <dbReference type="Rhea" id="RHEA:14801"/>
        <dbReference type="ChEBI" id="CHEBI:30616"/>
        <dbReference type="ChEBI" id="CHEBI:57604"/>
        <dbReference type="ChEBI" id="CHEBI:58272"/>
        <dbReference type="ChEBI" id="CHEBI:456216"/>
        <dbReference type="EC" id="2.7.2.3"/>
    </reaction>
</comment>
<comment type="pathway">
    <text>Carbohydrate degradation; glycolysis; pyruvate from D-glyceraldehyde 3-phosphate: step 2/5.</text>
</comment>
<comment type="subunit">
    <text>Monomer.</text>
</comment>
<comment type="subcellular location">
    <subcellularLocation>
        <location>Cytoplasm</location>
    </subcellularLocation>
</comment>
<comment type="similarity">
    <text evidence="2">Belongs to the phosphoglycerate kinase family.</text>
</comment>
<proteinExistence type="evidence at protein level"/>
<gene>
    <name type="primary">pgk</name>
    <name type="ordered locus">TTHA0906</name>
</gene>
<keyword id="KW-0002">3D-structure</keyword>
<keyword id="KW-0067">ATP-binding</keyword>
<keyword id="KW-0963">Cytoplasm</keyword>
<keyword id="KW-0903">Direct protein sequencing</keyword>
<keyword id="KW-0324">Glycolysis</keyword>
<keyword id="KW-0418">Kinase</keyword>
<keyword id="KW-0547">Nucleotide-binding</keyword>
<keyword id="KW-1185">Reference proteome</keyword>
<keyword id="KW-0808">Transferase</keyword>
<sequence>MRTLLDLDPKGKRVLVRVDYNVPVQDGKVQDETRILESLPTLRHLLAGGASLVLLSHLGRPKGPDPKYSLAPVGEALRAHLPEARFAPFPPGSEEARREAEALRPGEVLLLENVRFEPGEEKNDPELSARYARLGEAFVLDAFGSAHRAHASVVGVARLLPAYAGFLMEKEVRALSRLLKDPERPYAVVLGGAKVSDKIGVIESLLPRIDRLLIGGAMAFTFLKALGGEVGRSLVEEDRLDLAKDLLGRAEALGVRVYLPEDVVAAERIEAGVETRVFPARAIPVPYMGLDIGPKTREAFARALEGARTVFWNGPMGVFEVPPFDEGTLAVGQAIAALEGAFTVVGGGDSVAAVNRLGLKERFGHVSTGGGASLEFLEKGTLPGLEVLEG</sequence>
<reference key="1">
    <citation type="journal article" date="1988" name="Biochem. J.">
        <title>Nucleotide sequence of the phosphoglycerate kinase gene from the extreme thermophile Thermus thermophilus. Comparison of the deduced amino acid sequence with that of the mesophilic yeast phosphoglycerate kinase.</title>
        <authorList>
            <person name="Bowen D."/>
            <person name="Littlechild J.A."/>
            <person name="Fothergill J.E."/>
            <person name="Watson H.C."/>
            <person name="Hall L."/>
        </authorList>
    </citation>
    <scope>NUCLEOTIDE SEQUENCE [GENOMIC DNA]</scope>
    <scope>PARTIAL PROTEIN SEQUENCE</scope>
</reference>
<reference key="2">
    <citation type="submission" date="2004-11" db="EMBL/GenBank/DDBJ databases">
        <title>Complete genome sequence of Thermus thermophilus HB8.</title>
        <authorList>
            <person name="Masui R."/>
            <person name="Kurokawa K."/>
            <person name="Nakagawa N."/>
            <person name="Tokunaga F."/>
            <person name="Koyama Y."/>
            <person name="Shibata T."/>
            <person name="Oshima T."/>
            <person name="Yokoyama S."/>
            <person name="Yasunaga T."/>
            <person name="Kuramitsu S."/>
        </authorList>
    </citation>
    <scope>NUCLEOTIDE SEQUENCE [LARGE SCALE GENOMIC DNA]</scope>
    <source>
        <strain>ATCC 27634 / DSM 579 / HB8</strain>
    </source>
</reference>
<dbReference type="EC" id="2.7.2.3"/>
<dbReference type="EMBL" id="X12464">
    <property type="protein sequence ID" value="CAA31006.1"/>
    <property type="molecule type" value="Genomic_DNA"/>
</dbReference>
<dbReference type="EMBL" id="AP008226">
    <property type="protein sequence ID" value="BAD70729.1"/>
    <property type="molecule type" value="Genomic_DNA"/>
</dbReference>
<dbReference type="RefSeq" id="WP_011228285.1">
    <property type="nucleotide sequence ID" value="NC_006461.1"/>
</dbReference>
<dbReference type="RefSeq" id="YP_144172.1">
    <property type="nucleotide sequence ID" value="NC_006461.1"/>
</dbReference>
<dbReference type="PDB" id="1V6S">
    <property type="method" value="X-ray"/>
    <property type="resolution" value="1.50 A"/>
    <property type="chains" value="A/B=1-390"/>
</dbReference>
<dbReference type="PDBsum" id="1V6S"/>
<dbReference type="SMR" id="P09403"/>
<dbReference type="EnsemblBacteria" id="BAD70729">
    <property type="protein sequence ID" value="BAD70729"/>
    <property type="gene ID" value="BAD70729"/>
</dbReference>
<dbReference type="GeneID" id="3169950"/>
<dbReference type="KEGG" id="ttj:TTHA0906"/>
<dbReference type="PATRIC" id="fig|300852.9.peg.898"/>
<dbReference type="eggNOG" id="COG0126">
    <property type="taxonomic scope" value="Bacteria"/>
</dbReference>
<dbReference type="HOGENOM" id="CLU_025427_0_2_0"/>
<dbReference type="PhylomeDB" id="P09403"/>
<dbReference type="BRENDA" id="2.7.2.3">
    <property type="organism ID" value="2305"/>
</dbReference>
<dbReference type="UniPathway" id="UPA00109">
    <property type="reaction ID" value="UER00185"/>
</dbReference>
<dbReference type="EvolutionaryTrace" id="P09403"/>
<dbReference type="Proteomes" id="UP000000532">
    <property type="component" value="Chromosome"/>
</dbReference>
<dbReference type="GO" id="GO:0005829">
    <property type="term" value="C:cytosol"/>
    <property type="evidence" value="ECO:0007669"/>
    <property type="project" value="TreeGrafter"/>
</dbReference>
<dbReference type="GO" id="GO:0043531">
    <property type="term" value="F:ADP binding"/>
    <property type="evidence" value="ECO:0007669"/>
    <property type="project" value="TreeGrafter"/>
</dbReference>
<dbReference type="GO" id="GO:0005524">
    <property type="term" value="F:ATP binding"/>
    <property type="evidence" value="ECO:0007669"/>
    <property type="project" value="UniProtKB-KW"/>
</dbReference>
<dbReference type="GO" id="GO:0004618">
    <property type="term" value="F:phosphoglycerate kinase activity"/>
    <property type="evidence" value="ECO:0007669"/>
    <property type="project" value="UniProtKB-UniRule"/>
</dbReference>
<dbReference type="GO" id="GO:0006094">
    <property type="term" value="P:gluconeogenesis"/>
    <property type="evidence" value="ECO:0007669"/>
    <property type="project" value="TreeGrafter"/>
</dbReference>
<dbReference type="GO" id="GO:0006096">
    <property type="term" value="P:glycolytic process"/>
    <property type="evidence" value="ECO:0007669"/>
    <property type="project" value="UniProtKB-UniRule"/>
</dbReference>
<dbReference type="CDD" id="cd00318">
    <property type="entry name" value="Phosphoglycerate_kinase"/>
    <property type="match status" value="1"/>
</dbReference>
<dbReference type="FunFam" id="3.40.50.1260:FF:000003">
    <property type="entry name" value="Phosphoglycerate kinase"/>
    <property type="match status" value="1"/>
</dbReference>
<dbReference type="FunFam" id="3.40.50.1260:FF:000006">
    <property type="entry name" value="Phosphoglycerate kinase"/>
    <property type="match status" value="1"/>
</dbReference>
<dbReference type="Gene3D" id="3.40.50.1260">
    <property type="entry name" value="Phosphoglycerate kinase, N-terminal domain"/>
    <property type="match status" value="2"/>
</dbReference>
<dbReference type="HAMAP" id="MF_00145">
    <property type="entry name" value="Phosphoglyc_kinase"/>
    <property type="match status" value="1"/>
</dbReference>
<dbReference type="InterPro" id="IPR001576">
    <property type="entry name" value="Phosphoglycerate_kinase"/>
</dbReference>
<dbReference type="InterPro" id="IPR015911">
    <property type="entry name" value="Phosphoglycerate_kinase_CS"/>
</dbReference>
<dbReference type="InterPro" id="IPR015824">
    <property type="entry name" value="Phosphoglycerate_kinase_N"/>
</dbReference>
<dbReference type="InterPro" id="IPR036043">
    <property type="entry name" value="Phosphoglycerate_kinase_sf"/>
</dbReference>
<dbReference type="PANTHER" id="PTHR11406">
    <property type="entry name" value="PHOSPHOGLYCERATE KINASE"/>
    <property type="match status" value="1"/>
</dbReference>
<dbReference type="PANTHER" id="PTHR11406:SF23">
    <property type="entry name" value="PHOSPHOGLYCERATE KINASE 1, CHLOROPLASTIC-RELATED"/>
    <property type="match status" value="1"/>
</dbReference>
<dbReference type="Pfam" id="PF00162">
    <property type="entry name" value="PGK"/>
    <property type="match status" value="1"/>
</dbReference>
<dbReference type="PIRSF" id="PIRSF000724">
    <property type="entry name" value="Pgk"/>
    <property type="match status" value="1"/>
</dbReference>
<dbReference type="PRINTS" id="PR00477">
    <property type="entry name" value="PHGLYCKINASE"/>
</dbReference>
<dbReference type="SUPFAM" id="SSF53748">
    <property type="entry name" value="Phosphoglycerate kinase"/>
    <property type="match status" value="1"/>
</dbReference>
<dbReference type="PROSITE" id="PS00111">
    <property type="entry name" value="PGLYCERATE_KINASE"/>
    <property type="match status" value="1"/>
</dbReference>
<protein>
    <recommendedName>
        <fullName>Phosphoglycerate kinase</fullName>
        <ecNumber>2.7.2.3</ecNumber>
    </recommendedName>
</protein>
<evidence type="ECO:0000250" key="1"/>
<evidence type="ECO:0000305" key="2"/>
<evidence type="ECO:0007829" key="3">
    <source>
        <dbReference type="PDB" id="1V6S"/>
    </source>
</evidence>